<keyword id="KW-1003">Cell membrane</keyword>
<keyword id="KW-0378">Hydrolase</keyword>
<keyword id="KW-0472">Membrane</keyword>
<keyword id="KW-0479">Metal-binding</keyword>
<keyword id="KW-0482">Metalloprotease</keyword>
<keyword id="KW-0645">Protease</keyword>
<keyword id="KW-1185">Reference proteome</keyword>
<keyword id="KW-0812">Transmembrane</keyword>
<keyword id="KW-1133">Transmembrane helix</keyword>
<keyword id="KW-0862">Zinc</keyword>
<sequence>MLYQQIAKNKRRTILVMAGFVFLVALIGAAVGYLFAGTATGGVIIALVIAVIYVSIMVGQSTDVVMSMNNAREIHSADEAPELWHIVEDMALVARVPMPRVFIIDDPSPNAFATGNNPQHAAVAATTGLLAIMNREELESVMAHEMTHVRNYDIRLQTIALALTAAISLLVNFAGNFMWFGASSRRDDREEGAGGVFAIIGSILLIILAPLAATMVQMALSRQREYQADAGAVELTRNPQGMISALRQLQHAEPMQNVDPASAALYISDPQENARHKSLSGLFDTHPPLEARIERLEKM</sequence>
<proteinExistence type="inferred from homology"/>
<feature type="chain" id="PRO_1000098823" description="Protease HtpX homolog">
    <location>
        <begin position="1"/>
        <end position="299"/>
    </location>
</feature>
<feature type="transmembrane region" description="Helical" evidence="1">
    <location>
        <begin position="14"/>
        <end position="34"/>
    </location>
</feature>
<feature type="transmembrane region" description="Helical" evidence="1">
    <location>
        <begin position="39"/>
        <end position="59"/>
    </location>
</feature>
<feature type="transmembrane region" description="Helical" evidence="1">
    <location>
        <begin position="159"/>
        <end position="179"/>
    </location>
</feature>
<feature type="transmembrane region" description="Helical" evidence="1">
    <location>
        <begin position="196"/>
        <end position="216"/>
    </location>
</feature>
<feature type="active site" evidence="1">
    <location>
        <position position="145"/>
    </location>
</feature>
<feature type="binding site" evidence="1">
    <location>
        <position position="144"/>
    </location>
    <ligand>
        <name>Zn(2+)</name>
        <dbReference type="ChEBI" id="CHEBI:29105"/>
        <note>catalytic</note>
    </ligand>
</feature>
<feature type="binding site" evidence="1">
    <location>
        <position position="148"/>
    </location>
    <ligand>
        <name>Zn(2+)</name>
        <dbReference type="ChEBI" id="CHEBI:29105"/>
        <note>catalytic</note>
    </ligand>
</feature>
<feature type="binding site" evidence="1">
    <location>
        <position position="225"/>
    </location>
    <ligand>
        <name>Zn(2+)</name>
        <dbReference type="ChEBI" id="CHEBI:29105"/>
        <note>catalytic</note>
    </ligand>
</feature>
<evidence type="ECO:0000255" key="1">
    <source>
        <dbReference type="HAMAP-Rule" id="MF_00188"/>
    </source>
</evidence>
<dbReference type="EC" id="3.4.24.-" evidence="1"/>
<dbReference type="EMBL" id="AP008937">
    <property type="protein sequence ID" value="BAG26543.1"/>
    <property type="molecule type" value="Genomic_DNA"/>
</dbReference>
<dbReference type="RefSeq" id="WP_012390799.1">
    <property type="nucleotide sequence ID" value="NC_010610.1"/>
</dbReference>
<dbReference type="KEGG" id="lfe:LAF_0207"/>
<dbReference type="PATRIC" id="fig|334390.5.peg.230"/>
<dbReference type="eggNOG" id="COG0501">
    <property type="taxonomic scope" value="Bacteria"/>
</dbReference>
<dbReference type="HOGENOM" id="CLU_042266_2_1_9"/>
<dbReference type="Proteomes" id="UP000001697">
    <property type="component" value="Chromosome"/>
</dbReference>
<dbReference type="GO" id="GO:0005886">
    <property type="term" value="C:plasma membrane"/>
    <property type="evidence" value="ECO:0007669"/>
    <property type="project" value="UniProtKB-SubCell"/>
</dbReference>
<dbReference type="GO" id="GO:0004222">
    <property type="term" value="F:metalloendopeptidase activity"/>
    <property type="evidence" value="ECO:0007669"/>
    <property type="project" value="UniProtKB-UniRule"/>
</dbReference>
<dbReference type="GO" id="GO:0008270">
    <property type="term" value="F:zinc ion binding"/>
    <property type="evidence" value="ECO:0007669"/>
    <property type="project" value="UniProtKB-UniRule"/>
</dbReference>
<dbReference type="GO" id="GO:0006508">
    <property type="term" value="P:proteolysis"/>
    <property type="evidence" value="ECO:0007669"/>
    <property type="project" value="UniProtKB-KW"/>
</dbReference>
<dbReference type="CDD" id="cd07340">
    <property type="entry name" value="M48B_Htpx_like"/>
    <property type="match status" value="1"/>
</dbReference>
<dbReference type="Gene3D" id="3.30.2010.10">
    <property type="entry name" value="Metalloproteases ('zincins'), catalytic domain"/>
    <property type="match status" value="1"/>
</dbReference>
<dbReference type="HAMAP" id="MF_00188">
    <property type="entry name" value="Pept_M48_protease_HtpX"/>
    <property type="match status" value="1"/>
</dbReference>
<dbReference type="InterPro" id="IPR050083">
    <property type="entry name" value="HtpX_protease"/>
</dbReference>
<dbReference type="InterPro" id="IPR022919">
    <property type="entry name" value="Pept_M48_protease_HtpX"/>
</dbReference>
<dbReference type="InterPro" id="IPR001915">
    <property type="entry name" value="Peptidase_M48"/>
</dbReference>
<dbReference type="NCBIfam" id="NF003425">
    <property type="entry name" value="PRK04897.1"/>
    <property type="match status" value="1"/>
</dbReference>
<dbReference type="PANTHER" id="PTHR43221">
    <property type="entry name" value="PROTEASE HTPX"/>
    <property type="match status" value="1"/>
</dbReference>
<dbReference type="PANTHER" id="PTHR43221:SF1">
    <property type="entry name" value="PROTEASE HTPX"/>
    <property type="match status" value="1"/>
</dbReference>
<dbReference type="Pfam" id="PF01435">
    <property type="entry name" value="Peptidase_M48"/>
    <property type="match status" value="1"/>
</dbReference>
<accession>B2GA61</accession>
<organism>
    <name type="scientific">Limosilactobacillus fermentum (strain NBRC 3956 / LMG 18251)</name>
    <name type="common">Lactobacillus fermentum</name>
    <dbReference type="NCBI Taxonomy" id="334390"/>
    <lineage>
        <taxon>Bacteria</taxon>
        <taxon>Bacillati</taxon>
        <taxon>Bacillota</taxon>
        <taxon>Bacilli</taxon>
        <taxon>Lactobacillales</taxon>
        <taxon>Lactobacillaceae</taxon>
        <taxon>Limosilactobacillus</taxon>
    </lineage>
</organism>
<comment type="cofactor">
    <cofactor evidence="1">
        <name>Zn(2+)</name>
        <dbReference type="ChEBI" id="CHEBI:29105"/>
    </cofactor>
    <text evidence="1">Binds 1 zinc ion per subunit.</text>
</comment>
<comment type="subcellular location">
    <subcellularLocation>
        <location evidence="1">Cell membrane</location>
        <topology evidence="1">Multi-pass membrane protein</topology>
    </subcellularLocation>
</comment>
<comment type="similarity">
    <text evidence="1">Belongs to the peptidase M48B family.</text>
</comment>
<reference key="1">
    <citation type="journal article" date="2008" name="DNA Res.">
        <title>Comparative genome analysis of Lactobacillus reuteri and Lactobacillus fermentum reveal a genomic island for reuterin and cobalamin production.</title>
        <authorList>
            <person name="Morita H."/>
            <person name="Toh H."/>
            <person name="Fukuda S."/>
            <person name="Horikawa H."/>
            <person name="Oshima K."/>
            <person name="Suzuki T."/>
            <person name="Murakami M."/>
            <person name="Hisamatsu S."/>
            <person name="Kato Y."/>
            <person name="Takizawa T."/>
            <person name="Fukuoka H."/>
            <person name="Yoshimura T."/>
            <person name="Itoh K."/>
            <person name="O'Sullivan D.J."/>
            <person name="McKay L.L."/>
            <person name="Ohno H."/>
            <person name="Kikuchi J."/>
            <person name="Masaoka T."/>
            <person name="Hattori M."/>
        </authorList>
    </citation>
    <scope>NUCLEOTIDE SEQUENCE [LARGE SCALE GENOMIC DNA]</scope>
    <source>
        <strain>NBRC 3956 / LMG 18251</strain>
    </source>
</reference>
<gene>
    <name evidence="1" type="primary">htpX</name>
    <name type="ordered locus">LAF_0207</name>
</gene>
<protein>
    <recommendedName>
        <fullName evidence="1">Protease HtpX homolog</fullName>
        <ecNumber evidence="1">3.4.24.-</ecNumber>
    </recommendedName>
</protein>
<name>HTPX_LIMF3</name>